<protein>
    <recommendedName>
        <fullName>Tubulin alpha-2 chain</fullName>
        <ecNumber evidence="2">3.6.5.-</ecNumber>
    </recommendedName>
</protein>
<dbReference type="EC" id="3.6.5.-" evidence="2"/>
<dbReference type="EMBL" id="M11448">
    <property type="protein sequence ID" value="AAA33098.1"/>
    <property type="molecule type" value="Genomic_DNA"/>
</dbReference>
<dbReference type="EMBL" id="K01806">
    <property type="protein sequence ID" value="AAA33097.1"/>
    <property type="molecule type" value="Genomic_DNA"/>
</dbReference>
<dbReference type="PIR" id="B53298">
    <property type="entry name" value="B53298"/>
</dbReference>
<dbReference type="SMR" id="P09205"/>
<dbReference type="iPTMnet" id="P09205"/>
<dbReference type="ProMEX" id="P09205"/>
<dbReference type="GO" id="GO:0005737">
    <property type="term" value="C:cytoplasm"/>
    <property type="evidence" value="ECO:0007669"/>
    <property type="project" value="UniProtKB-KW"/>
</dbReference>
<dbReference type="GO" id="GO:0005874">
    <property type="term" value="C:microtubule"/>
    <property type="evidence" value="ECO:0007669"/>
    <property type="project" value="UniProtKB-KW"/>
</dbReference>
<dbReference type="GO" id="GO:0005525">
    <property type="term" value="F:GTP binding"/>
    <property type="evidence" value="ECO:0007669"/>
    <property type="project" value="UniProtKB-KW"/>
</dbReference>
<dbReference type="GO" id="GO:0016787">
    <property type="term" value="F:hydrolase activity"/>
    <property type="evidence" value="ECO:0007669"/>
    <property type="project" value="UniProtKB-KW"/>
</dbReference>
<dbReference type="GO" id="GO:0046872">
    <property type="term" value="F:metal ion binding"/>
    <property type="evidence" value="ECO:0007669"/>
    <property type="project" value="UniProtKB-KW"/>
</dbReference>
<dbReference type="GO" id="GO:0005200">
    <property type="term" value="F:structural constituent of cytoskeleton"/>
    <property type="evidence" value="ECO:0007669"/>
    <property type="project" value="InterPro"/>
</dbReference>
<dbReference type="GO" id="GO:0007017">
    <property type="term" value="P:microtubule-based process"/>
    <property type="evidence" value="ECO:0007669"/>
    <property type="project" value="InterPro"/>
</dbReference>
<dbReference type="CDD" id="cd02186">
    <property type="entry name" value="alpha_tubulin"/>
    <property type="match status" value="1"/>
</dbReference>
<dbReference type="FunFam" id="1.10.287.600:FF:000005">
    <property type="entry name" value="Tubulin alpha chain"/>
    <property type="match status" value="1"/>
</dbReference>
<dbReference type="FunFam" id="3.30.1330.20:FF:000001">
    <property type="entry name" value="Tubulin alpha chain"/>
    <property type="match status" value="1"/>
</dbReference>
<dbReference type="FunFam" id="3.40.50.1440:FF:000004">
    <property type="entry name" value="Tubulin alpha chain"/>
    <property type="match status" value="1"/>
</dbReference>
<dbReference type="Gene3D" id="1.10.287.600">
    <property type="entry name" value="Helix hairpin bin"/>
    <property type="match status" value="1"/>
</dbReference>
<dbReference type="Gene3D" id="3.30.1330.20">
    <property type="entry name" value="Tubulin/FtsZ, C-terminal domain"/>
    <property type="match status" value="1"/>
</dbReference>
<dbReference type="Gene3D" id="3.40.50.1440">
    <property type="entry name" value="Tubulin/FtsZ, GTPase domain"/>
    <property type="match status" value="1"/>
</dbReference>
<dbReference type="InterPro" id="IPR002452">
    <property type="entry name" value="Alpha_tubulin"/>
</dbReference>
<dbReference type="InterPro" id="IPR008280">
    <property type="entry name" value="Tub_FtsZ_C"/>
</dbReference>
<dbReference type="InterPro" id="IPR000217">
    <property type="entry name" value="Tubulin"/>
</dbReference>
<dbReference type="InterPro" id="IPR037103">
    <property type="entry name" value="Tubulin/FtsZ-like_C"/>
</dbReference>
<dbReference type="InterPro" id="IPR018316">
    <property type="entry name" value="Tubulin/FtsZ_2-layer-sand-dom"/>
</dbReference>
<dbReference type="InterPro" id="IPR036525">
    <property type="entry name" value="Tubulin/FtsZ_GTPase_sf"/>
</dbReference>
<dbReference type="InterPro" id="IPR023123">
    <property type="entry name" value="Tubulin_C"/>
</dbReference>
<dbReference type="InterPro" id="IPR017975">
    <property type="entry name" value="Tubulin_CS"/>
</dbReference>
<dbReference type="InterPro" id="IPR003008">
    <property type="entry name" value="Tubulin_FtsZ_GTPase"/>
</dbReference>
<dbReference type="PANTHER" id="PTHR11588">
    <property type="entry name" value="TUBULIN"/>
    <property type="match status" value="1"/>
</dbReference>
<dbReference type="Pfam" id="PF00091">
    <property type="entry name" value="Tubulin"/>
    <property type="match status" value="1"/>
</dbReference>
<dbReference type="Pfam" id="PF03953">
    <property type="entry name" value="Tubulin_C"/>
    <property type="match status" value="1"/>
</dbReference>
<dbReference type="PRINTS" id="PR01162">
    <property type="entry name" value="ALPHATUBULIN"/>
</dbReference>
<dbReference type="PRINTS" id="PR01161">
    <property type="entry name" value="TUBULIN"/>
</dbReference>
<dbReference type="SMART" id="SM00864">
    <property type="entry name" value="Tubulin"/>
    <property type="match status" value="1"/>
</dbReference>
<dbReference type="SMART" id="SM00865">
    <property type="entry name" value="Tubulin_C"/>
    <property type="match status" value="1"/>
</dbReference>
<dbReference type="SUPFAM" id="SSF55307">
    <property type="entry name" value="Tubulin C-terminal domain-like"/>
    <property type="match status" value="1"/>
</dbReference>
<dbReference type="SUPFAM" id="SSF52490">
    <property type="entry name" value="Tubulin nucleotide-binding domain-like"/>
    <property type="match status" value="1"/>
</dbReference>
<dbReference type="PROSITE" id="PS00227">
    <property type="entry name" value="TUBULIN"/>
    <property type="match status" value="1"/>
</dbReference>
<comment type="function">
    <text>Tubulin is the major constituent of microtubules, a cylinder consisting of laterally associated linear protofilaments composed of alpha- and beta-tubulin heterodimers. Microtubules grow by the addition of GTP-tubulin dimers to the microtubule end, where a stabilizing cap forms. Below the cap, tubulin dimers are in GDP-bound state, owing to GTPase activity of alpha-tubulin.</text>
</comment>
<comment type="catalytic activity">
    <reaction evidence="2">
        <text>GTP + H2O = GDP + phosphate + H(+)</text>
        <dbReference type="Rhea" id="RHEA:19669"/>
        <dbReference type="ChEBI" id="CHEBI:15377"/>
        <dbReference type="ChEBI" id="CHEBI:15378"/>
        <dbReference type="ChEBI" id="CHEBI:37565"/>
        <dbReference type="ChEBI" id="CHEBI:43474"/>
        <dbReference type="ChEBI" id="CHEBI:58189"/>
    </reaction>
    <physiologicalReaction direction="left-to-right" evidence="2">
        <dbReference type="Rhea" id="RHEA:19670"/>
    </physiologicalReaction>
</comment>
<comment type="cofactor">
    <cofactor evidence="2">
        <name>Mg(2+)</name>
        <dbReference type="ChEBI" id="CHEBI:18420"/>
    </cofactor>
</comment>
<comment type="subunit">
    <text>Dimer of alpha and beta chains. A typical microtubule is a hollow water-filled tube with an outer diameter of 25 nm and an inner diameter of 15 nM. Alpha-beta heterodimers associate head-to-tail to form protofilaments running lengthwise along the microtubule wall with the beta-tubulin subunit facing the microtubule plus end conferring a structural polarity. Microtubules usually have 13 protofilaments but different protofilament numbers can be found in some organisms and specialized cells.</text>
</comment>
<comment type="subcellular location">
    <subcellularLocation>
        <location>Cytoplasm</location>
        <location>Cytoskeleton</location>
    </subcellularLocation>
</comment>
<comment type="PTM">
    <text evidence="1">Undergoes a tyrosination/detyrosination cycle, the cyclic removal and re-addition of a C-terminal tyrosine residue by the enzymes tubulin tyrosine carboxypeptidase (TTCP) and tubulin tyrosine ligase (TTL), respectively.</text>
</comment>
<comment type="similarity">
    <text evidence="4">Belongs to the tubulin family.</text>
</comment>
<reference key="1">
    <citation type="journal article" date="1985" name="Mol. Cell. Biol.">
        <title>The two alpha-tubulin genes of Chlamydomonas reinhardi code for slightly different proteins.</title>
        <authorList>
            <person name="Silflow C.D."/>
            <person name="Chisholm R.L."/>
            <person name="Conner T.W."/>
            <person name="Ranum L.P.W."/>
        </authorList>
    </citation>
    <scope>NUCLEOTIDE SEQUENCE [GENOMIC DNA]</scope>
</reference>
<reference key="2">
    <citation type="journal article" date="1984" name="Mol. Cell. Biol.">
        <title>Repeated consensus sequence and pseudopromoters in the four coordinately regulated tubulin genes of Chlamydomonas reinhardi.</title>
        <authorList>
            <person name="Brunke K.J."/>
            <person name="Anthony J.G."/>
            <person name="Sternberg E.J."/>
            <person name="Weeks D.P."/>
        </authorList>
    </citation>
    <scope>NUCLEOTIDE SEQUENCE [GENOMIC DNA] OF 1-16</scope>
</reference>
<reference key="3">
    <citation type="journal article" date="1987" name="Proc. Natl. Acad. Sci. U.S.A.">
        <title>Identification of an acetylation site of Chlamydomonas alpha-tubulin.</title>
        <authorList>
            <person name="Ledizet M."/>
            <person name="Piperno G."/>
        </authorList>
    </citation>
    <scope>ACETYLATION AT LYS-40</scope>
</reference>
<evidence type="ECO:0000250" key="1"/>
<evidence type="ECO:0000250" key="2">
    <source>
        <dbReference type="UniProtKB" id="P68363"/>
    </source>
</evidence>
<evidence type="ECO:0000269" key="3">
    <source>
    </source>
</evidence>
<evidence type="ECO:0000305" key="4"/>
<name>TBA2_CHLRE</name>
<sequence length="451" mass="49585">MREVISIHIGQAGIQVGNACWELYCLEHGIQPDGQMPSDKTIGGGDDAFNTFFSETGAGKHVPRCIFLDLEPTVVDEVRTGTYRQLFHPEQLISGKEDAANNFARGHYTIGKEIVDLALDRIRKLADNCTGLQGFLVFNAVGGGTGSGLGSLLLERLSVDYGKKSKLGFTVYPSPQVSTAVVEPYNSVLSTHSLLEHTDVAVMLDNEAIYDICRRSLDIERPTYTNLNRLIAQVISSLTASLRFDGALNVDITEFQTNLVPYPRIHFMLSSYAPIISAEKAYHEQLSVAEITNAAFEPASMMVKCDPLHGKYMACCLMYRGDVVPKDVNASVATIKTKRTIQFVDWCPTGFKCGINYQPPTVVPGVDLAKVQRAVCMISNSTAIGEIFSRLDHKFDLMYAKRAFVHWYVGEGMEEGEFSEAREDLAALEKDFEEVGAESAEGAGEGEGEEY</sequence>
<feature type="chain" id="PRO_0000048155" description="Tubulin alpha-2 chain">
    <location>
        <begin position="1"/>
        <end position="451"/>
    </location>
</feature>
<feature type="active site" evidence="2">
    <location>
        <position position="254"/>
    </location>
</feature>
<feature type="binding site" evidence="2">
    <location>
        <position position="11"/>
    </location>
    <ligand>
        <name>GTP</name>
        <dbReference type="ChEBI" id="CHEBI:37565"/>
    </ligand>
</feature>
<feature type="binding site" evidence="2">
    <location>
        <position position="71"/>
    </location>
    <ligand>
        <name>GTP</name>
        <dbReference type="ChEBI" id="CHEBI:37565"/>
    </ligand>
</feature>
<feature type="binding site" evidence="2">
    <location>
        <position position="71"/>
    </location>
    <ligand>
        <name>Mg(2+)</name>
        <dbReference type="ChEBI" id="CHEBI:18420"/>
    </ligand>
</feature>
<feature type="binding site" evidence="2">
    <location>
        <position position="144"/>
    </location>
    <ligand>
        <name>GTP</name>
        <dbReference type="ChEBI" id="CHEBI:37565"/>
    </ligand>
</feature>
<feature type="binding site" evidence="2">
    <location>
        <position position="145"/>
    </location>
    <ligand>
        <name>GTP</name>
        <dbReference type="ChEBI" id="CHEBI:37565"/>
    </ligand>
</feature>
<feature type="binding site" evidence="2">
    <location>
        <position position="179"/>
    </location>
    <ligand>
        <name>GTP</name>
        <dbReference type="ChEBI" id="CHEBI:37565"/>
    </ligand>
</feature>
<feature type="binding site" evidence="2">
    <location>
        <position position="206"/>
    </location>
    <ligand>
        <name>GTP</name>
        <dbReference type="ChEBI" id="CHEBI:37565"/>
    </ligand>
</feature>
<feature type="binding site" evidence="2">
    <location>
        <position position="228"/>
    </location>
    <ligand>
        <name>GTP</name>
        <dbReference type="ChEBI" id="CHEBI:37565"/>
    </ligand>
</feature>
<feature type="site" description="Involved in polymerization">
    <location>
        <position position="451"/>
    </location>
</feature>
<feature type="modified residue" description="N6-acetyllysine" evidence="3">
    <location>
        <position position="40"/>
    </location>
</feature>
<gene>
    <name type="primary">TUBA2</name>
</gene>
<proteinExistence type="evidence at protein level"/>
<organism>
    <name type="scientific">Chlamydomonas reinhardtii</name>
    <name type="common">Chlamydomonas smithii</name>
    <dbReference type="NCBI Taxonomy" id="3055"/>
    <lineage>
        <taxon>Eukaryota</taxon>
        <taxon>Viridiplantae</taxon>
        <taxon>Chlorophyta</taxon>
        <taxon>core chlorophytes</taxon>
        <taxon>Chlorophyceae</taxon>
        <taxon>CS clade</taxon>
        <taxon>Chlamydomonadales</taxon>
        <taxon>Chlamydomonadaceae</taxon>
        <taxon>Chlamydomonas</taxon>
    </lineage>
</organism>
<keyword id="KW-0007">Acetylation</keyword>
<keyword id="KW-0963">Cytoplasm</keyword>
<keyword id="KW-0206">Cytoskeleton</keyword>
<keyword id="KW-0342">GTP-binding</keyword>
<keyword id="KW-0378">Hydrolase</keyword>
<keyword id="KW-0460">Magnesium</keyword>
<keyword id="KW-0479">Metal-binding</keyword>
<keyword id="KW-0493">Microtubule</keyword>
<keyword id="KW-0547">Nucleotide-binding</keyword>
<accession>P09205</accession>